<reference key="1">
    <citation type="journal article" date="2000" name="Biochim. Biophys. Acta">
        <title>Sheep cytosolic branched-chain amino acid aminotransferase: cDNA cloning, primary structure and molecular modelling and its unique expression in muscles.</title>
        <authorList>
            <person name="Bonfils J."/>
            <person name="Faure M."/>
            <person name="Gibrat J.-F."/>
            <person name="Glomot F."/>
            <person name="Papet I."/>
        </authorList>
    </citation>
    <scope>NUCLEOTIDE SEQUENCE [MRNA]</scope>
    <scope>TISSUE SPECIFICITY</scope>
    <scope>3D-STRUCTURE MODELING</scope>
    <source>
        <tissue>Brain</tissue>
    </source>
</reference>
<sequence length="385" mass="43073">MDCNNGCSAEGTGEGGSKEPVETFKAEDLIITRATILKEKPDPSTLVFGTVFTDHMLTVEWSLELGWEKPRIKPLQNLSLHPGSSALHYAVELFEGLKAFRGVDNKIRLFRPNLNMDRMYRSAMRATLPAFDKKELLECIQQLVKLDEEWVPYSTSASLYIRPTFIGTEPSLGVKKPTKALLFVILSPVGPYFSSGSFNPVSLWANPKYVRAWKGGTGDCKMGGNYGSSLFAQCEAVENACQQVLWLYGEENQITEVGTMNLFLYWINEDGEEELATPPLDGIILPGVMRQSILDLAHKWGEFKVSERYLTMDDLTTAVEENRVREMFGSGTACVVCPVSTILYKDETIHIPTMENGPKLASRILEKLTDIQYGREESDWTITVA</sequence>
<comment type="function">
    <text evidence="2">Catalyzes the first reaction in the catabolism of the essential branched chain amino acids leucine, isoleucine, and valine.</text>
</comment>
<comment type="catalytic activity">
    <reaction evidence="2">
        <text>L-leucine + 2-oxoglutarate = 4-methyl-2-oxopentanoate + L-glutamate</text>
        <dbReference type="Rhea" id="RHEA:18321"/>
        <dbReference type="ChEBI" id="CHEBI:16810"/>
        <dbReference type="ChEBI" id="CHEBI:17865"/>
        <dbReference type="ChEBI" id="CHEBI:29985"/>
        <dbReference type="ChEBI" id="CHEBI:57427"/>
        <dbReference type="EC" id="2.6.1.42"/>
    </reaction>
    <physiologicalReaction direction="left-to-right" evidence="2">
        <dbReference type="Rhea" id="RHEA:18322"/>
    </physiologicalReaction>
</comment>
<comment type="catalytic activity">
    <reaction evidence="2">
        <text>L-isoleucine + 2-oxoglutarate = (S)-3-methyl-2-oxopentanoate + L-glutamate</text>
        <dbReference type="Rhea" id="RHEA:24801"/>
        <dbReference type="ChEBI" id="CHEBI:16810"/>
        <dbReference type="ChEBI" id="CHEBI:29985"/>
        <dbReference type="ChEBI" id="CHEBI:35146"/>
        <dbReference type="ChEBI" id="CHEBI:58045"/>
        <dbReference type="EC" id="2.6.1.42"/>
    </reaction>
    <physiologicalReaction direction="left-to-right" evidence="2">
        <dbReference type="Rhea" id="RHEA:24802"/>
    </physiologicalReaction>
</comment>
<comment type="catalytic activity">
    <reaction evidence="2">
        <text>L-valine + 2-oxoglutarate = 3-methyl-2-oxobutanoate + L-glutamate</text>
        <dbReference type="Rhea" id="RHEA:24813"/>
        <dbReference type="ChEBI" id="CHEBI:11851"/>
        <dbReference type="ChEBI" id="CHEBI:16810"/>
        <dbReference type="ChEBI" id="CHEBI:29985"/>
        <dbReference type="ChEBI" id="CHEBI:57762"/>
        <dbReference type="EC" id="2.6.1.42"/>
    </reaction>
    <physiologicalReaction direction="left-to-right" evidence="2">
        <dbReference type="Rhea" id="RHEA:24814"/>
    </physiologicalReaction>
</comment>
<comment type="cofactor">
    <cofactor evidence="2">
        <name>pyridoxal 5'-phosphate</name>
        <dbReference type="ChEBI" id="CHEBI:597326"/>
    </cofactor>
</comment>
<comment type="subunit">
    <text evidence="1">Homodimer.</text>
</comment>
<comment type="subcellular location">
    <subcellularLocation>
        <location evidence="2">Cytoplasm</location>
    </subcellularLocation>
</comment>
<comment type="tissue specificity">
    <text evidence="3">Expressed in muscles.</text>
</comment>
<comment type="similarity">
    <text evidence="4">Belongs to the class-IV pyridoxal-phosphate-dependent aminotransferase family.</text>
</comment>
<organism>
    <name type="scientific">Ovis aries</name>
    <name type="common">Sheep</name>
    <dbReference type="NCBI Taxonomy" id="9940"/>
    <lineage>
        <taxon>Eukaryota</taxon>
        <taxon>Metazoa</taxon>
        <taxon>Chordata</taxon>
        <taxon>Craniata</taxon>
        <taxon>Vertebrata</taxon>
        <taxon>Euteleostomi</taxon>
        <taxon>Mammalia</taxon>
        <taxon>Eutheria</taxon>
        <taxon>Laurasiatheria</taxon>
        <taxon>Artiodactyla</taxon>
        <taxon>Ruminantia</taxon>
        <taxon>Pecora</taxon>
        <taxon>Bovidae</taxon>
        <taxon>Caprinae</taxon>
        <taxon>Ovis</taxon>
    </lineage>
</organism>
<keyword id="KW-0028">Amino-acid biosynthesis</keyword>
<keyword id="KW-0032">Aminotransferase</keyword>
<keyword id="KW-0100">Branched-chain amino acid biosynthesis</keyword>
<keyword id="KW-0963">Cytoplasm</keyword>
<keyword id="KW-0443">Lipid metabolism</keyword>
<keyword id="KW-0663">Pyridoxal phosphate</keyword>
<keyword id="KW-1185">Reference proteome</keyword>
<keyword id="KW-0808">Transferase</keyword>
<proteinExistence type="evidence at transcript level"/>
<protein>
    <recommendedName>
        <fullName>Branched-chain-amino-acid aminotransferase, cytosolic</fullName>
        <shortName>BCAT(c)</shortName>
        <ecNumber evidence="2">2.6.1.42</ecNumber>
    </recommendedName>
</protein>
<dbReference type="EC" id="2.6.1.42" evidence="2"/>
<dbReference type="EMBL" id="AF184916">
    <property type="protein sequence ID" value="AAG16994.1"/>
    <property type="molecule type" value="mRNA"/>
</dbReference>
<dbReference type="RefSeq" id="NP_001009444.1">
    <property type="nucleotide sequence ID" value="NM_001009444.1"/>
</dbReference>
<dbReference type="SMR" id="Q9GKM4"/>
<dbReference type="STRING" id="9940.ENSOARP00000021583"/>
<dbReference type="PaxDb" id="9940-ENSOARP00000021583"/>
<dbReference type="Ensembl" id="ENSOART00020066162">
    <property type="protein sequence ID" value="ENSOARP00020034610"/>
    <property type="gene ID" value="ENSOARG00020004542"/>
</dbReference>
<dbReference type="Ensembl" id="ENSOART00215087207">
    <property type="protein sequence ID" value="ENSOARP00215047766"/>
    <property type="gene ID" value="ENSOARG00215051381"/>
</dbReference>
<dbReference type="Ensembl" id="ENSOART00220069825">
    <property type="protein sequence ID" value="ENSOARP00220037902"/>
    <property type="gene ID" value="ENSOARG00220041875"/>
</dbReference>
<dbReference type="Ensembl" id="ENSOART00225089828">
    <property type="protein sequence ID" value="ENSOARP00225047478"/>
    <property type="gene ID" value="ENSOARG00225053861"/>
</dbReference>
<dbReference type="Ensembl" id="ENSOART00260017697">
    <property type="protein sequence ID" value="ENSOARP00260008890"/>
    <property type="gene ID" value="ENSOARG00260010857"/>
</dbReference>
<dbReference type="GeneID" id="443485"/>
<dbReference type="KEGG" id="oas:443485"/>
<dbReference type="CTD" id="586"/>
<dbReference type="eggNOG" id="KOG0975">
    <property type="taxonomic scope" value="Eukaryota"/>
</dbReference>
<dbReference type="OrthoDB" id="1732691at2759"/>
<dbReference type="BRENDA" id="2.6.1.42">
    <property type="organism ID" value="2668"/>
</dbReference>
<dbReference type="Proteomes" id="UP000002356">
    <property type="component" value="Unplaced"/>
</dbReference>
<dbReference type="GO" id="GO:0005737">
    <property type="term" value="C:cytoplasm"/>
    <property type="evidence" value="ECO:0000250"/>
    <property type="project" value="UniProtKB"/>
</dbReference>
<dbReference type="GO" id="GO:0005739">
    <property type="term" value="C:mitochondrion"/>
    <property type="evidence" value="ECO:0007669"/>
    <property type="project" value="TreeGrafter"/>
</dbReference>
<dbReference type="GO" id="GO:0052656">
    <property type="term" value="F:L-isoleucine-2-oxoglutarate transaminase activity"/>
    <property type="evidence" value="ECO:0000250"/>
    <property type="project" value="UniProtKB"/>
</dbReference>
<dbReference type="GO" id="GO:0052654">
    <property type="term" value="F:L-leucine-2-oxoglutarate transaminase activity"/>
    <property type="evidence" value="ECO:0000250"/>
    <property type="project" value="UniProtKB"/>
</dbReference>
<dbReference type="GO" id="GO:0052655">
    <property type="term" value="F:L-valine-2-oxoglutarate transaminase activity"/>
    <property type="evidence" value="ECO:0000250"/>
    <property type="project" value="UniProtKB"/>
</dbReference>
<dbReference type="GO" id="GO:0009098">
    <property type="term" value="P:L-leucine biosynthetic process"/>
    <property type="evidence" value="ECO:0007669"/>
    <property type="project" value="TreeGrafter"/>
</dbReference>
<dbReference type="GO" id="GO:0009099">
    <property type="term" value="P:L-valine biosynthetic process"/>
    <property type="evidence" value="ECO:0007669"/>
    <property type="project" value="TreeGrafter"/>
</dbReference>
<dbReference type="GO" id="GO:0006629">
    <property type="term" value="P:lipid metabolic process"/>
    <property type="evidence" value="ECO:0007669"/>
    <property type="project" value="UniProtKB-KW"/>
</dbReference>
<dbReference type="CDD" id="cd01557">
    <property type="entry name" value="BCAT_beta_family"/>
    <property type="match status" value="1"/>
</dbReference>
<dbReference type="FunFam" id="3.20.10.10:FF:000005">
    <property type="entry name" value="Branched-chain-amino-acid aminotransferase"/>
    <property type="match status" value="1"/>
</dbReference>
<dbReference type="FunFam" id="3.30.470.10:FF:000002">
    <property type="entry name" value="Branched-chain-amino-acid aminotransferase"/>
    <property type="match status" value="1"/>
</dbReference>
<dbReference type="Gene3D" id="3.30.470.10">
    <property type="match status" value="1"/>
</dbReference>
<dbReference type="Gene3D" id="3.20.10.10">
    <property type="entry name" value="D-amino Acid Aminotransferase, subunit A, domain 2"/>
    <property type="match status" value="1"/>
</dbReference>
<dbReference type="InterPro" id="IPR001544">
    <property type="entry name" value="Aminotrans_IV"/>
</dbReference>
<dbReference type="InterPro" id="IPR018300">
    <property type="entry name" value="Aminotrans_IV_CS"/>
</dbReference>
<dbReference type="InterPro" id="IPR036038">
    <property type="entry name" value="Aminotransferase-like"/>
</dbReference>
<dbReference type="InterPro" id="IPR005786">
    <property type="entry name" value="B_amino_transII"/>
</dbReference>
<dbReference type="InterPro" id="IPR043132">
    <property type="entry name" value="BCAT-like_C"/>
</dbReference>
<dbReference type="InterPro" id="IPR043131">
    <property type="entry name" value="BCAT-like_N"/>
</dbReference>
<dbReference type="InterPro" id="IPR033939">
    <property type="entry name" value="BCAT_family"/>
</dbReference>
<dbReference type="NCBIfam" id="TIGR01123">
    <property type="entry name" value="ilvE_II"/>
    <property type="match status" value="1"/>
</dbReference>
<dbReference type="NCBIfam" id="NF009897">
    <property type="entry name" value="PRK13357.1"/>
    <property type="match status" value="1"/>
</dbReference>
<dbReference type="PANTHER" id="PTHR11825:SF70">
    <property type="entry name" value="BRANCHED-CHAIN-AMINO-ACID AMINOTRANSFERASE, CYTOSOLIC"/>
    <property type="match status" value="1"/>
</dbReference>
<dbReference type="PANTHER" id="PTHR11825">
    <property type="entry name" value="SUBGROUP IIII AMINOTRANSFERASE"/>
    <property type="match status" value="1"/>
</dbReference>
<dbReference type="Pfam" id="PF01063">
    <property type="entry name" value="Aminotran_4"/>
    <property type="match status" value="1"/>
</dbReference>
<dbReference type="PIRSF" id="PIRSF006468">
    <property type="entry name" value="BCAT1"/>
    <property type="match status" value="1"/>
</dbReference>
<dbReference type="SUPFAM" id="SSF56752">
    <property type="entry name" value="D-aminoacid aminotransferase-like PLP-dependent enzymes"/>
    <property type="match status" value="1"/>
</dbReference>
<dbReference type="PROSITE" id="PS00770">
    <property type="entry name" value="AA_TRANSFER_CLASS_4"/>
    <property type="match status" value="1"/>
</dbReference>
<gene>
    <name type="primary">BCAT1</name>
</gene>
<accession>Q9GKM4</accession>
<evidence type="ECO:0000250" key="1">
    <source>
        <dbReference type="UniProtKB" id="P54687"/>
    </source>
</evidence>
<evidence type="ECO:0000250" key="2">
    <source>
        <dbReference type="UniProtKB" id="P54690"/>
    </source>
</evidence>
<evidence type="ECO:0000269" key="3">
    <source>
    </source>
</evidence>
<evidence type="ECO:0000305" key="4"/>
<feature type="chain" id="PRO_0000103295" description="Branched-chain-amino-acid aminotransferase, cytosolic">
    <location>
        <begin position="1"/>
        <end position="385"/>
    </location>
</feature>
<feature type="modified residue" description="N6-(pyridoxal phosphate)lysine" evidence="1">
    <location>
        <position position="221"/>
    </location>
</feature>
<name>BCAT1_SHEEP</name>